<feature type="chain" id="PRO_0000428660" description="Probable low-specificity L-threonine aldolase 2">
    <location>
        <begin position="1"/>
        <end position="355"/>
    </location>
</feature>
<feature type="modified residue" description="N6-(pyridoxal phosphate)lysine" evidence="1">
    <location>
        <position position="211"/>
    </location>
</feature>
<keyword id="KW-0025">Alternative splicing</keyword>
<keyword id="KW-0456">Lyase</keyword>
<keyword id="KW-0663">Pyridoxal phosphate</keyword>
<keyword id="KW-1185">Reference proteome</keyword>
<proteinExistence type="evidence at protein level"/>
<reference key="1">
    <citation type="journal article" date="2000" name="Nature">
        <title>Sequence and analysis of chromosome 3 of the plant Arabidopsis thaliana.</title>
        <authorList>
            <person name="Salanoubat M."/>
            <person name="Lemcke K."/>
            <person name="Rieger M."/>
            <person name="Ansorge W."/>
            <person name="Unseld M."/>
            <person name="Fartmann B."/>
            <person name="Valle G."/>
            <person name="Bloecker H."/>
            <person name="Perez-Alonso M."/>
            <person name="Obermaier B."/>
            <person name="Delseny M."/>
            <person name="Boutry M."/>
            <person name="Grivell L.A."/>
            <person name="Mache R."/>
            <person name="Puigdomenech P."/>
            <person name="De Simone V."/>
            <person name="Choisne N."/>
            <person name="Artiguenave F."/>
            <person name="Robert C."/>
            <person name="Brottier P."/>
            <person name="Wincker P."/>
            <person name="Cattolico L."/>
            <person name="Weissenbach J."/>
            <person name="Saurin W."/>
            <person name="Quetier F."/>
            <person name="Schaefer M."/>
            <person name="Mueller-Auer S."/>
            <person name="Gabel C."/>
            <person name="Fuchs M."/>
            <person name="Benes V."/>
            <person name="Wurmbach E."/>
            <person name="Drzonek H."/>
            <person name="Erfle H."/>
            <person name="Jordan N."/>
            <person name="Bangert S."/>
            <person name="Wiedelmann R."/>
            <person name="Kranz H."/>
            <person name="Voss H."/>
            <person name="Holland R."/>
            <person name="Brandt P."/>
            <person name="Nyakatura G."/>
            <person name="Vezzi A."/>
            <person name="D'Angelo M."/>
            <person name="Pallavicini A."/>
            <person name="Toppo S."/>
            <person name="Simionati B."/>
            <person name="Conrad A."/>
            <person name="Hornischer K."/>
            <person name="Kauer G."/>
            <person name="Loehnert T.-H."/>
            <person name="Nordsiek G."/>
            <person name="Reichelt J."/>
            <person name="Scharfe M."/>
            <person name="Schoen O."/>
            <person name="Bargues M."/>
            <person name="Terol J."/>
            <person name="Climent J."/>
            <person name="Navarro P."/>
            <person name="Collado C."/>
            <person name="Perez-Perez A."/>
            <person name="Ottenwaelder B."/>
            <person name="Duchemin D."/>
            <person name="Cooke R."/>
            <person name="Laudie M."/>
            <person name="Berger-Llauro C."/>
            <person name="Purnelle B."/>
            <person name="Masuy D."/>
            <person name="de Haan M."/>
            <person name="Maarse A.C."/>
            <person name="Alcaraz J.-P."/>
            <person name="Cottet A."/>
            <person name="Casacuberta E."/>
            <person name="Monfort A."/>
            <person name="Argiriou A."/>
            <person name="Flores M."/>
            <person name="Liguori R."/>
            <person name="Vitale D."/>
            <person name="Mannhaupt G."/>
            <person name="Haase D."/>
            <person name="Schoof H."/>
            <person name="Rudd S."/>
            <person name="Zaccaria P."/>
            <person name="Mewes H.-W."/>
            <person name="Mayer K.F.X."/>
            <person name="Kaul S."/>
            <person name="Town C.D."/>
            <person name="Koo H.L."/>
            <person name="Tallon L.J."/>
            <person name="Jenkins J."/>
            <person name="Rooney T."/>
            <person name="Rizzo M."/>
            <person name="Walts A."/>
            <person name="Utterback T."/>
            <person name="Fujii C.Y."/>
            <person name="Shea T.P."/>
            <person name="Creasy T.H."/>
            <person name="Haas B."/>
            <person name="Maiti R."/>
            <person name="Wu D."/>
            <person name="Peterson J."/>
            <person name="Van Aken S."/>
            <person name="Pai G."/>
            <person name="Militscher J."/>
            <person name="Sellers P."/>
            <person name="Gill J.E."/>
            <person name="Feldblyum T.V."/>
            <person name="Preuss D."/>
            <person name="Lin X."/>
            <person name="Nierman W.C."/>
            <person name="Salzberg S.L."/>
            <person name="White O."/>
            <person name="Venter J.C."/>
            <person name="Fraser C.M."/>
            <person name="Kaneko T."/>
            <person name="Nakamura Y."/>
            <person name="Sato S."/>
            <person name="Kato T."/>
            <person name="Asamizu E."/>
            <person name="Sasamoto S."/>
            <person name="Kimura T."/>
            <person name="Idesawa K."/>
            <person name="Kawashima K."/>
            <person name="Kishida Y."/>
            <person name="Kiyokawa C."/>
            <person name="Kohara M."/>
            <person name="Matsumoto M."/>
            <person name="Matsuno A."/>
            <person name="Muraki A."/>
            <person name="Nakayama S."/>
            <person name="Nakazaki N."/>
            <person name="Shinpo S."/>
            <person name="Takeuchi C."/>
            <person name="Wada T."/>
            <person name="Watanabe A."/>
            <person name="Yamada M."/>
            <person name="Yasuda M."/>
            <person name="Tabata S."/>
        </authorList>
    </citation>
    <scope>NUCLEOTIDE SEQUENCE [LARGE SCALE GENOMIC DNA]</scope>
    <source>
        <strain>cv. Columbia</strain>
    </source>
</reference>
<reference key="2">
    <citation type="journal article" date="2017" name="Plant J.">
        <title>Araport11: a complete reannotation of the Arabidopsis thaliana reference genome.</title>
        <authorList>
            <person name="Cheng C.Y."/>
            <person name="Krishnakumar V."/>
            <person name="Chan A.P."/>
            <person name="Thibaud-Nissen F."/>
            <person name="Schobel S."/>
            <person name="Town C.D."/>
        </authorList>
    </citation>
    <scope>GENOME REANNOTATION</scope>
    <source>
        <strain>cv. Columbia</strain>
    </source>
</reference>
<reference key="3">
    <citation type="journal article" date="2003" name="Science">
        <title>Empirical analysis of transcriptional activity in the Arabidopsis genome.</title>
        <authorList>
            <person name="Yamada K."/>
            <person name="Lim J."/>
            <person name="Dale J.M."/>
            <person name="Chen H."/>
            <person name="Shinn P."/>
            <person name="Palm C.J."/>
            <person name="Southwick A.M."/>
            <person name="Wu H.C."/>
            <person name="Kim C.J."/>
            <person name="Nguyen M."/>
            <person name="Pham P.K."/>
            <person name="Cheuk R.F."/>
            <person name="Karlin-Newmann G."/>
            <person name="Liu S.X."/>
            <person name="Lam B."/>
            <person name="Sakano H."/>
            <person name="Wu T."/>
            <person name="Yu G."/>
            <person name="Miranda M."/>
            <person name="Quach H.L."/>
            <person name="Tripp M."/>
            <person name="Chang C.H."/>
            <person name="Lee J.M."/>
            <person name="Toriumi M.J."/>
            <person name="Chan M.M."/>
            <person name="Tang C.C."/>
            <person name="Onodera C.S."/>
            <person name="Deng J.M."/>
            <person name="Akiyama K."/>
            <person name="Ansari Y."/>
            <person name="Arakawa T."/>
            <person name="Banh J."/>
            <person name="Banno F."/>
            <person name="Bowser L."/>
            <person name="Brooks S.Y."/>
            <person name="Carninci P."/>
            <person name="Chao Q."/>
            <person name="Choy N."/>
            <person name="Enju A."/>
            <person name="Goldsmith A.D."/>
            <person name="Gurjal M."/>
            <person name="Hansen N.F."/>
            <person name="Hayashizaki Y."/>
            <person name="Johnson-Hopson C."/>
            <person name="Hsuan V.W."/>
            <person name="Iida K."/>
            <person name="Karnes M."/>
            <person name="Khan S."/>
            <person name="Koesema E."/>
            <person name="Ishida J."/>
            <person name="Jiang P.X."/>
            <person name="Jones T."/>
            <person name="Kawai J."/>
            <person name="Kamiya A."/>
            <person name="Meyers C."/>
            <person name="Nakajima M."/>
            <person name="Narusaka M."/>
            <person name="Seki M."/>
            <person name="Sakurai T."/>
            <person name="Satou M."/>
            <person name="Tamse R."/>
            <person name="Vaysberg M."/>
            <person name="Wallender E.K."/>
            <person name="Wong C."/>
            <person name="Yamamura Y."/>
            <person name="Yuan S."/>
            <person name="Shinozaki K."/>
            <person name="Davis R.W."/>
            <person name="Theologis A."/>
            <person name="Ecker J.R."/>
        </authorList>
    </citation>
    <scope>NUCLEOTIDE SEQUENCE [LARGE SCALE MRNA]</scope>
    <source>
        <strain>cv. Columbia</strain>
    </source>
</reference>
<reference key="4">
    <citation type="submission" date="2004-09" db="EMBL/GenBank/DDBJ databases">
        <title>Large-scale analysis of RIKEN Arabidopsis full-length (RAFL) cDNAs.</title>
        <authorList>
            <person name="Totoki Y."/>
            <person name="Seki M."/>
            <person name="Ishida J."/>
            <person name="Nakajima M."/>
            <person name="Enju A."/>
            <person name="Kamiya A."/>
            <person name="Narusaka M."/>
            <person name="Shin-i T."/>
            <person name="Nakagawa M."/>
            <person name="Sakamoto N."/>
            <person name="Oishi K."/>
            <person name="Kohara Y."/>
            <person name="Kobayashi M."/>
            <person name="Toyoda A."/>
            <person name="Sakaki Y."/>
            <person name="Sakurai T."/>
            <person name="Iida K."/>
            <person name="Akiyama K."/>
            <person name="Satou M."/>
            <person name="Toyoda T."/>
            <person name="Konagaya A."/>
            <person name="Carninci P."/>
            <person name="Kawai J."/>
            <person name="Hayashizaki Y."/>
            <person name="Shinozaki K."/>
        </authorList>
    </citation>
    <scope>NUCLEOTIDE SEQUENCE [LARGE SCALE MRNA]</scope>
    <source>
        <strain>cv. Columbia</strain>
    </source>
</reference>
<reference key="5">
    <citation type="submission" date="2002-03" db="EMBL/GenBank/DDBJ databases">
        <title>Full-length cDNA from Arabidopsis thaliana.</title>
        <authorList>
            <person name="Brover V.V."/>
            <person name="Troukhan M.E."/>
            <person name="Alexandrov N.A."/>
            <person name="Lu Y.-P."/>
            <person name="Flavell R.B."/>
            <person name="Feldmann K.A."/>
        </authorList>
    </citation>
    <scope>NUCLEOTIDE SEQUENCE [LARGE SCALE MRNA]</scope>
</reference>
<reference key="6">
    <citation type="journal article" date="2006" name="Plant Cell">
        <title>Two Arabidopsis threonine aldolases are nonredundant and compete with threonine deaminase for a common substrate pool.</title>
        <authorList>
            <person name="Joshi V."/>
            <person name="Laubengayer K.M."/>
            <person name="Schauer N."/>
            <person name="Fernie A.R."/>
            <person name="Jander G."/>
        </authorList>
    </citation>
    <scope>FUNCTION</scope>
    <scope>BIOPHYSICOCHEMICAL PROPERTIES</scope>
    <scope>DISRUPTION PHENOTYPE</scope>
    <scope>TISSUE SPECIFICITY</scope>
    <scope>CATALYTIC ACTIVITY</scope>
</reference>
<evidence type="ECO:0000250" key="1"/>
<evidence type="ECO:0000269" key="2">
    <source>
    </source>
</evidence>
<evidence type="ECO:0000305" key="3"/>
<evidence type="ECO:0000305" key="4">
    <source>
    </source>
</evidence>
<sequence>MVTPTTIRTVDLRSDTVTKPTESMRSAMANAEVDDDVLGNDPTALRLEKEVAEIAGKEAAMFVPSGTMGNLISVLVHCDERGSEVILGDDSHIHIYENGGVSSLGGVHPRTVKNEEDGTMEIGAIEAAVRSPKGDLHHPVTKLICLENTQANCGGRCLPIEYIDKVGELAKKHGLKLHIDGARIFNASVALGVPVKRIVQAADSVSICLSKGIGAPVGSVIVGSKKFITKARWLRKTLGGGMRQIGVLCAAALVALHENVAKLEDDHKKARVLAEGLNRIERLRVNVAAVETNIIYVDIPEDPKFGAEEACKSLEDVGVLVIPQATFRIRIVLHHQISDVDVEYVLSCFEKIFHS</sequence>
<accession>Q9FPH3</accession>
<accession>Q9M835</accession>
<name>THA2_ARATH</name>
<organism>
    <name type="scientific">Arabidopsis thaliana</name>
    <name type="common">Mouse-ear cress</name>
    <dbReference type="NCBI Taxonomy" id="3702"/>
    <lineage>
        <taxon>Eukaryota</taxon>
        <taxon>Viridiplantae</taxon>
        <taxon>Streptophyta</taxon>
        <taxon>Embryophyta</taxon>
        <taxon>Tracheophyta</taxon>
        <taxon>Spermatophyta</taxon>
        <taxon>Magnoliopsida</taxon>
        <taxon>eudicotyledons</taxon>
        <taxon>Gunneridae</taxon>
        <taxon>Pentapetalae</taxon>
        <taxon>rosids</taxon>
        <taxon>malvids</taxon>
        <taxon>Brassicales</taxon>
        <taxon>Brassicaceae</taxon>
        <taxon>Camelineae</taxon>
        <taxon>Arabidopsis</taxon>
    </lineage>
</organism>
<gene>
    <name type="primary">THA2</name>
    <name type="ordered locus">At3g04520</name>
    <name type="ORF">T27C4.17</name>
</gene>
<dbReference type="EC" id="4.1.2.48" evidence="2"/>
<dbReference type="EMBL" id="AC022287">
    <property type="protein sequence ID" value="AAF63783.1"/>
    <property type="status" value="ALT_SEQ"/>
    <property type="molecule type" value="Genomic_DNA"/>
</dbReference>
<dbReference type="EMBL" id="CP002686">
    <property type="protein sequence ID" value="AEE74091.1"/>
    <property type="molecule type" value="Genomic_DNA"/>
</dbReference>
<dbReference type="EMBL" id="CP002686">
    <property type="protein sequence ID" value="ANM65683.1"/>
    <property type="molecule type" value="Genomic_DNA"/>
</dbReference>
<dbReference type="EMBL" id="AF325033">
    <property type="protein sequence ID" value="AAG40385.1"/>
    <property type="molecule type" value="mRNA"/>
</dbReference>
<dbReference type="EMBL" id="AY091093">
    <property type="protein sequence ID" value="AAM14044.1"/>
    <property type="molecule type" value="mRNA"/>
</dbReference>
<dbReference type="EMBL" id="AY123033">
    <property type="protein sequence ID" value="AAM67566.1"/>
    <property type="molecule type" value="mRNA"/>
</dbReference>
<dbReference type="EMBL" id="AK175345">
    <property type="protein sequence ID" value="BAD43108.1"/>
    <property type="molecule type" value="mRNA"/>
</dbReference>
<dbReference type="EMBL" id="AY085456">
    <property type="protein sequence ID" value="AAM62682.1"/>
    <property type="molecule type" value="mRNA"/>
</dbReference>
<dbReference type="RefSeq" id="NP_001327633.1">
    <molecule id="Q9FPH3-1"/>
    <property type="nucleotide sequence ID" value="NM_001337534.1"/>
</dbReference>
<dbReference type="RefSeq" id="NP_566228.1">
    <molecule id="Q9FPH3-1"/>
    <property type="nucleotide sequence ID" value="NM_111323.4"/>
</dbReference>
<dbReference type="SMR" id="Q9FPH3"/>
<dbReference type="FunCoup" id="Q9FPH3">
    <property type="interactions" value="1265"/>
</dbReference>
<dbReference type="STRING" id="3702.Q9FPH3"/>
<dbReference type="PaxDb" id="3702-AT3G04520.1"/>
<dbReference type="ProteomicsDB" id="234386">
    <molecule id="Q9FPH3-1"/>
</dbReference>
<dbReference type="EnsemblPlants" id="AT3G04520.1">
    <molecule id="Q9FPH3-1"/>
    <property type="protein sequence ID" value="AT3G04520.1"/>
    <property type="gene ID" value="AT3G04520"/>
</dbReference>
<dbReference type="EnsemblPlants" id="AT3G04520.3">
    <molecule id="Q9FPH3-1"/>
    <property type="protein sequence ID" value="AT3G04520.3"/>
    <property type="gene ID" value="AT3G04520"/>
</dbReference>
<dbReference type="GeneID" id="819608"/>
<dbReference type="Gramene" id="AT3G04520.1">
    <molecule id="Q9FPH3-1"/>
    <property type="protein sequence ID" value="AT3G04520.1"/>
    <property type="gene ID" value="AT3G04520"/>
</dbReference>
<dbReference type="Gramene" id="AT3G04520.3">
    <molecule id="Q9FPH3-1"/>
    <property type="protein sequence ID" value="AT3G04520.3"/>
    <property type="gene ID" value="AT3G04520"/>
</dbReference>
<dbReference type="KEGG" id="ath:AT3G04520"/>
<dbReference type="Araport" id="AT3G04520"/>
<dbReference type="TAIR" id="AT3G04520">
    <property type="gene designation" value="THA2"/>
</dbReference>
<dbReference type="eggNOG" id="KOG1368">
    <property type="taxonomic scope" value="Eukaryota"/>
</dbReference>
<dbReference type="InParanoid" id="Q9FPH3"/>
<dbReference type="OMA" id="MRQTGFM"/>
<dbReference type="OrthoDB" id="10261951at2759"/>
<dbReference type="PhylomeDB" id="Q9FPH3"/>
<dbReference type="SABIO-RK" id="Q9FPH3"/>
<dbReference type="UniPathway" id="UPA00044">
    <property type="reaction ID" value="UER00429"/>
</dbReference>
<dbReference type="CD-CODE" id="4299E36E">
    <property type="entry name" value="Nucleolus"/>
</dbReference>
<dbReference type="PRO" id="PR:Q9FPH3"/>
<dbReference type="Proteomes" id="UP000006548">
    <property type="component" value="Chromosome 3"/>
</dbReference>
<dbReference type="ExpressionAtlas" id="Q9FPH3">
    <property type="expression patterns" value="baseline and differential"/>
</dbReference>
<dbReference type="GO" id="GO:0005829">
    <property type="term" value="C:cytosol"/>
    <property type="evidence" value="ECO:0007005"/>
    <property type="project" value="TAIR"/>
</dbReference>
<dbReference type="GO" id="GO:0008732">
    <property type="term" value="F:L-allo-threonine aldolase activity"/>
    <property type="evidence" value="ECO:0007669"/>
    <property type="project" value="RHEA"/>
</dbReference>
<dbReference type="GO" id="GO:0004793">
    <property type="term" value="F:threonine aldolase activity"/>
    <property type="evidence" value="ECO:0000314"/>
    <property type="project" value="TAIR"/>
</dbReference>
<dbReference type="GO" id="GO:0006567">
    <property type="term" value="P:threonine catabolic process"/>
    <property type="evidence" value="ECO:0000315"/>
    <property type="project" value="TAIR"/>
</dbReference>
<dbReference type="CDD" id="cd06502">
    <property type="entry name" value="TA_like"/>
    <property type="match status" value="1"/>
</dbReference>
<dbReference type="FunFam" id="3.90.1150.10:FF:000041">
    <property type="entry name" value="Low-specificity L-threonine aldolase"/>
    <property type="match status" value="1"/>
</dbReference>
<dbReference type="FunFam" id="3.40.640.10:FF:000063">
    <property type="entry name" value="probable low-specificity L-threonine aldolase 1"/>
    <property type="match status" value="1"/>
</dbReference>
<dbReference type="Gene3D" id="3.90.1150.10">
    <property type="entry name" value="Aspartate Aminotransferase, domain 1"/>
    <property type="match status" value="1"/>
</dbReference>
<dbReference type="Gene3D" id="3.40.640.10">
    <property type="entry name" value="Type I PLP-dependent aspartate aminotransferase-like (Major domain)"/>
    <property type="match status" value="1"/>
</dbReference>
<dbReference type="InterPro" id="IPR001597">
    <property type="entry name" value="ArAA_b-elim_lyase/Thr_aldolase"/>
</dbReference>
<dbReference type="InterPro" id="IPR023603">
    <property type="entry name" value="Low_specificity_L-TA-like"/>
</dbReference>
<dbReference type="InterPro" id="IPR015424">
    <property type="entry name" value="PyrdxlP-dep_Trfase"/>
</dbReference>
<dbReference type="InterPro" id="IPR015421">
    <property type="entry name" value="PyrdxlP-dep_Trfase_major"/>
</dbReference>
<dbReference type="InterPro" id="IPR015422">
    <property type="entry name" value="PyrdxlP-dep_Trfase_small"/>
</dbReference>
<dbReference type="NCBIfam" id="NF041359">
    <property type="entry name" value="GntG_guanitoxin"/>
    <property type="match status" value="1"/>
</dbReference>
<dbReference type="NCBIfam" id="NF007825">
    <property type="entry name" value="PRK10534.1"/>
    <property type="match status" value="1"/>
</dbReference>
<dbReference type="PANTHER" id="PTHR48097">
    <property type="entry name" value="L-THREONINE ALDOLASE-RELATED"/>
    <property type="match status" value="1"/>
</dbReference>
<dbReference type="PANTHER" id="PTHR48097:SF14">
    <property type="entry name" value="LOW-SPECIFICITY L-THREONINE ALDOLASE 2-RELATED"/>
    <property type="match status" value="1"/>
</dbReference>
<dbReference type="Pfam" id="PF01212">
    <property type="entry name" value="Beta_elim_lyase"/>
    <property type="match status" value="1"/>
</dbReference>
<dbReference type="PIRSF" id="PIRSF017617">
    <property type="entry name" value="Thr_aldolase"/>
    <property type="match status" value="1"/>
</dbReference>
<dbReference type="SUPFAM" id="SSF53383">
    <property type="entry name" value="PLP-dependent transferases"/>
    <property type="match status" value="1"/>
</dbReference>
<protein>
    <recommendedName>
        <fullName>Probable low-specificity L-threonine aldolase 2</fullName>
        <ecNumber evidence="2">4.1.2.48</ecNumber>
    </recommendedName>
    <alternativeName>
        <fullName>Threonine aldolase 2</fullName>
    </alternativeName>
</protein>
<comment type="function">
    <text evidence="2">Threonine aldolase involved in threonine degradation to glycine. May play a role in the removal of L-allo-threonine.</text>
</comment>
<comment type="catalytic activity">
    <reaction evidence="2">
        <text>L-threonine = acetaldehyde + glycine</text>
        <dbReference type="Rhea" id="RHEA:19625"/>
        <dbReference type="ChEBI" id="CHEBI:15343"/>
        <dbReference type="ChEBI" id="CHEBI:57305"/>
        <dbReference type="ChEBI" id="CHEBI:57926"/>
        <dbReference type="EC" id="4.1.2.48"/>
    </reaction>
    <physiologicalReaction direction="left-to-right" evidence="4">
        <dbReference type="Rhea" id="RHEA:19626"/>
    </physiologicalReaction>
</comment>
<comment type="catalytic activity">
    <reaction evidence="2">
        <text>L-allo-threonine = acetaldehyde + glycine</text>
        <dbReference type="Rhea" id="RHEA:26209"/>
        <dbReference type="ChEBI" id="CHEBI:15343"/>
        <dbReference type="ChEBI" id="CHEBI:57305"/>
        <dbReference type="ChEBI" id="CHEBI:58585"/>
        <dbReference type="EC" id="4.1.2.48"/>
    </reaction>
    <physiologicalReaction direction="left-to-right" evidence="4">
        <dbReference type="Rhea" id="RHEA:26210"/>
    </physiologicalReaction>
</comment>
<comment type="cofactor">
    <cofactor evidence="1">
        <name>pyridoxal 5'-phosphate</name>
        <dbReference type="ChEBI" id="CHEBI:597326"/>
    </cofactor>
</comment>
<comment type="biophysicochemical properties">
    <kinetics>
        <KM evidence="2">3.8 mM for L-threonine</KM>
    </kinetics>
</comment>
<comment type="pathway">
    <text>Amino-acid degradation; L-threonine degradation via aldolase pathway; acetaldehyde and glycine from L-threonine: step 1/1.</text>
</comment>
<comment type="alternative products">
    <event type="alternative splicing"/>
    <isoform>
        <id>Q9FPH3-1</id>
        <name>1</name>
        <sequence type="displayed"/>
    </isoform>
    <text>A number of isoforms are produced. According to EST sequences.</text>
</comment>
<comment type="tissue specificity">
    <text evidence="2">Expressed in roots, leaf vasculature and flowers.</text>
</comment>
<comment type="disruption phenotype">
    <text evidence="2">Lethal albino phenotype when homozygous.</text>
</comment>
<comment type="similarity">
    <text evidence="3">Belongs to the threonine aldolase family.</text>
</comment>
<comment type="sequence caution" evidence="3">
    <conflict type="erroneous gene model prediction">
        <sequence resource="EMBL-CDS" id="AAF63783"/>
    </conflict>
</comment>